<comment type="function">
    <text evidence="1">This protein is involved in the repair of mismatches in DNA. It is possible that it carries out the mismatch recognition step. This protein has a weak ATPase activity.</text>
</comment>
<comment type="similarity">
    <text evidence="1">Belongs to the DNA mismatch repair MutS family.</text>
</comment>
<accession>Q0IE05</accession>
<reference key="1">
    <citation type="journal article" date="2006" name="Proc. Natl. Acad. Sci. U.S.A.">
        <title>Genome sequence of Synechococcus CC9311: insights into adaptation to a coastal environment.</title>
        <authorList>
            <person name="Palenik B."/>
            <person name="Ren Q."/>
            <person name="Dupont C.L."/>
            <person name="Myers G.S."/>
            <person name="Heidelberg J.F."/>
            <person name="Badger J.H."/>
            <person name="Madupu R."/>
            <person name="Nelson W.C."/>
            <person name="Brinkac L.M."/>
            <person name="Dodson R.J."/>
            <person name="Durkin A.S."/>
            <person name="Daugherty S.C."/>
            <person name="Sullivan S.A."/>
            <person name="Khouri H."/>
            <person name="Mohamoud Y."/>
            <person name="Halpin R."/>
            <person name="Paulsen I.T."/>
        </authorList>
    </citation>
    <scope>NUCLEOTIDE SEQUENCE [LARGE SCALE GENOMIC DNA]</scope>
    <source>
        <strain>CC9311</strain>
    </source>
</reference>
<keyword id="KW-0067">ATP-binding</keyword>
<keyword id="KW-0227">DNA damage</keyword>
<keyword id="KW-0234">DNA repair</keyword>
<keyword id="KW-0238">DNA-binding</keyword>
<keyword id="KW-0547">Nucleotide-binding</keyword>
<keyword id="KW-1185">Reference proteome</keyword>
<sequence>MALQGNLFGDAEPASSAPSKGQKRQDEPDQLDDHELTQDAKQRPRQRQGQQEHSEPSASSQSEEAHSEASTPAGKDQDNSDDDLPPWSHHSQVTPEQLTPMLRHYVELKAAHPERILLYRLGDFFECFFEDAIHLSRLLELTLTGKEAGKQIGRVPMAGIPHHAAERYCSELIRRGLSVALCDQLEAAPASGSAKGTLLRRDITRVLTPGTVLEEGLLSARRNNWLAAVVVEPAQGRQPFRWGLACADVSTGEFLVREQDNSAALHQELARLDPAELIHHNQNSVAPSWCPERLQRCDIGNTPFSQPEAEALLLERFRLQTLDGLGLQNVPLAMRAAGGLIAYLGETCPLDDNGITPPPLERPITCFPGDALVLDAQTRRNLELIATQRDNQFQGSLLWAIDRTLTAMGARCLRRWIEAPLMDPSIIRSRQASVSQLVSKRPLRQALRRLLRPMGDLERLAGRAGAGHAGARDLVAIADGLERLPQLANLITSQLDGGPSWLSDVLEPDPALAVIGASIRHQLMDNPPLSLSEGGLIHDGVDPLLDGLRNQLDDQESWLAEQEQLERQSSNNSNLKLQYHRTFGYFLSVSRARSGAVPDHWIRRQTLANEERFITPDLKAREGQIFQMRARAAQREYELFCELRGQIGEHAEAIRRSARAIAGLDALTSLAEAAATGGWCAPEITADRSMVIEQGRHPVVEQLLVEDAFTPNDSNLGTGIDLVVLTGPNASGKSCYLRQIGLIQLLAQIGSWVPAQAARIGIADRIFTRVGAVDDLAAGQSTFMVEMAETANILHHASERSLVLLDEIGRGTATFDGLSIAWAVSEHLAGDLQARTVFATHYHELNALAGERSNVANCQVLVEETGSDLVFLHRVAAGGASRSYGIEAARLAGVPASVVQRARQVLDQLAT</sequence>
<gene>
    <name evidence="1" type="primary">mutS</name>
    <name type="ordered locus">sync_0079</name>
</gene>
<name>MUTS_SYNS3</name>
<evidence type="ECO:0000255" key="1">
    <source>
        <dbReference type="HAMAP-Rule" id="MF_00096"/>
    </source>
</evidence>
<evidence type="ECO:0000256" key="2">
    <source>
        <dbReference type="SAM" id="MobiDB-lite"/>
    </source>
</evidence>
<organism>
    <name type="scientific">Synechococcus sp. (strain CC9311)</name>
    <dbReference type="NCBI Taxonomy" id="64471"/>
    <lineage>
        <taxon>Bacteria</taxon>
        <taxon>Bacillati</taxon>
        <taxon>Cyanobacteriota</taxon>
        <taxon>Cyanophyceae</taxon>
        <taxon>Synechococcales</taxon>
        <taxon>Synechococcaceae</taxon>
        <taxon>Synechococcus</taxon>
    </lineage>
</organism>
<feature type="chain" id="PRO_0000335229" description="DNA mismatch repair protein MutS">
    <location>
        <begin position="1"/>
        <end position="911"/>
    </location>
</feature>
<feature type="region of interest" description="Disordered" evidence="2">
    <location>
        <begin position="1"/>
        <end position="95"/>
    </location>
</feature>
<feature type="compositionally biased region" description="Basic and acidic residues" evidence="2">
    <location>
        <begin position="23"/>
        <end position="42"/>
    </location>
</feature>
<feature type="binding site" evidence="1">
    <location>
        <begin position="727"/>
        <end position="734"/>
    </location>
    <ligand>
        <name>ATP</name>
        <dbReference type="ChEBI" id="CHEBI:30616"/>
    </ligand>
</feature>
<dbReference type="EMBL" id="CP000435">
    <property type="protein sequence ID" value="ABI47685.1"/>
    <property type="molecule type" value="Genomic_DNA"/>
</dbReference>
<dbReference type="SMR" id="Q0IE05"/>
<dbReference type="STRING" id="64471.sync_0079"/>
<dbReference type="KEGG" id="syg:sync_0079"/>
<dbReference type="eggNOG" id="COG0249">
    <property type="taxonomic scope" value="Bacteria"/>
</dbReference>
<dbReference type="HOGENOM" id="CLU_002472_1_3_3"/>
<dbReference type="OrthoDB" id="9802448at2"/>
<dbReference type="Proteomes" id="UP000001961">
    <property type="component" value="Chromosome"/>
</dbReference>
<dbReference type="GO" id="GO:0005829">
    <property type="term" value="C:cytosol"/>
    <property type="evidence" value="ECO:0007669"/>
    <property type="project" value="TreeGrafter"/>
</dbReference>
<dbReference type="GO" id="GO:0005524">
    <property type="term" value="F:ATP binding"/>
    <property type="evidence" value="ECO:0007669"/>
    <property type="project" value="UniProtKB-UniRule"/>
</dbReference>
<dbReference type="GO" id="GO:0140664">
    <property type="term" value="F:ATP-dependent DNA damage sensor activity"/>
    <property type="evidence" value="ECO:0007669"/>
    <property type="project" value="InterPro"/>
</dbReference>
<dbReference type="GO" id="GO:0003684">
    <property type="term" value="F:damaged DNA binding"/>
    <property type="evidence" value="ECO:0007669"/>
    <property type="project" value="UniProtKB-UniRule"/>
</dbReference>
<dbReference type="GO" id="GO:0030983">
    <property type="term" value="F:mismatched DNA binding"/>
    <property type="evidence" value="ECO:0007669"/>
    <property type="project" value="InterPro"/>
</dbReference>
<dbReference type="GO" id="GO:0006298">
    <property type="term" value="P:mismatch repair"/>
    <property type="evidence" value="ECO:0007669"/>
    <property type="project" value="UniProtKB-UniRule"/>
</dbReference>
<dbReference type="CDD" id="cd03284">
    <property type="entry name" value="ABC_MutS1"/>
    <property type="match status" value="1"/>
</dbReference>
<dbReference type="FunFam" id="3.40.50.300:FF:000870">
    <property type="entry name" value="MutS protein homolog 4"/>
    <property type="match status" value="1"/>
</dbReference>
<dbReference type="Gene3D" id="1.10.1420.10">
    <property type="match status" value="2"/>
</dbReference>
<dbReference type="Gene3D" id="3.40.1170.10">
    <property type="entry name" value="DNA repair protein MutS, domain I"/>
    <property type="match status" value="1"/>
</dbReference>
<dbReference type="Gene3D" id="3.30.420.110">
    <property type="entry name" value="MutS, connector domain"/>
    <property type="match status" value="1"/>
</dbReference>
<dbReference type="Gene3D" id="3.40.50.300">
    <property type="entry name" value="P-loop containing nucleotide triphosphate hydrolases"/>
    <property type="match status" value="1"/>
</dbReference>
<dbReference type="HAMAP" id="MF_00096">
    <property type="entry name" value="MutS"/>
    <property type="match status" value="1"/>
</dbReference>
<dbReference type="InterPro" id="IPR005748">
    <property type="entry name" value="DNA_mismatch_repair_MutS"/>
</dbReference>
<dbReference type="InterPro" id="IPR007695">
    <property type="entry name" value="DNA_mismatch_repair_MutS-lik_N"/>
</dbReference>
<dbReference type="InterPro" id="IPR017261">
    <property type="entry name" value="DNA_mismatch_repair_MutS/MSH"/>
</dbReference>
<dbReference type="InterPro" id="IPR000432">
    <property type="entry name" value="DNA_mismatch_repair_MutS_C"/>
</dbReference>
<dbReference type="InterPro" id="IPR007861">
    <property type="entry name" value="DNA_mismatch_repair_MutS_clamp"/>
</dbReference>
<dbReference type="InterPro" id="IPR007696">
    <property type="entry name" value="DNA_mismatch_repair_MutS_core"/>
</dbReference>
<dbReference type="InterPro" id="IPR016151">
    <property type="entry name" value="DNA_mismatch_repair_MutS_N"/>
</dbReference>
<dbReference type="InterPro" id="IPR036187">
    <property type="entry name" value="DNA_mismatch_repair_MutS_sf"/>
</dbReference>
<dbReference type="InterPro" id="IPR007860">
    <property type="entry name" value="DNA_mmatch_repair_MutS_con_dom"/>
</dbReference>
<dbReference type="InterPro" id="IPR045076">
    <property type="entry name" value="MutS"/>
</dbReference>
<dbReference type="InterPro" id="IPR036678">
    <property type="entry name" value="MutS_con_dom_sf"/>
</dbReference>
<dbReference type="InterPro" id="IPR027417">
    <property type="entry name" value="P-loop_NTPase"/>
</dbReference>
<dbReference type="NCBIfam" id="TIGR01070">
    <property type="entry name" value="mutS1"/>
    <property type="match status" value="1"/>
</dbReference>
<dbReference type="NCBIfam" id="NF003810">
    <property type="entry name" value="PRK05399.1"/>
    <property type="match status" value="1"/>
</dbReference>
<dbReference type="PANTHER" id="PTHR11361:SF34">
    <property type="entry name" value="DNA MISMATCH REPAIR PROTEIN MSH1, MITOCHONDRIAL"/>
    <property type="match status" value="1"/>
</dbReference>
<dbReference type="PANTHER" id="PTHR11361">
    <property type="entry name" value="DNA MISMATCH REPAIR PROTEIN MUTS FAMILY MEMBER"/>
    <property type="match status" value="1"/>
</dbReference>
<dbReference type="Pfam" id="PF01624">
    <property type="entry name" value="MutS_I"/>
    <property type="match status" value="1"/>
</dbReference>
<dbReference type="Pfam" id="PF05188">
    <property type="entry name" value="MutS_II"/>
    <property type="match status" value="1"/>
</dbReference>
<dbReference type="Pfam" id="PF05192">
    <property type="entry name" value="MutS_III"/>
    <property type="match status" value="1"/>
</dbReference>
<dbReference type="Pfam" id="PF05190">
    <property type="entry name" value="MutS_IV"/>
    <property type="match status" value="1"/>
</dbReference>
<dbReference type="Pfam" id="PF00488">
    <property type="entry name" value="MutS_V"/>
    <property type="match status" value="1"/>
</dbReference>
<dbReference type="PIRSF" id="PIRSF037677">
    <property type="entry name" value="DNA_mis_repair_Msh6"/>
    <property type="match status" value="1"/>
</dbReference>
<dbReference type="SMART" id="SM00534">
    <property type="entry name" value="MUTSac"/>
    <property type="match status" value="1"/>
</dbReference>
<dbReference type="SMART" id="SM00533">
    <property type="entry name" value="MUTSd"/>
    <property type="match status" value="1"/>
</dbReference>
<dbReference type="SUPFAM" id="SSF55271">
    <property type="entry name" value="DNA repair protein MutS, domain I"/>
    <property type="match status" value="1"/>
</dbReference>
<dbReference type="SUPFAM" id="SSF53150">
    <property type="entry name" value="DNA repair protein MutS, domain II"/>
    <property type="match status" value="1"/>
</dbReference>
<dbReference type="SUPFAM" id="SSF48334">
    <property type="entry name" value="DNA repair protein MutS, domain III"/>
    <property type="match status" value="1"/>
</dbReference>
<dbReference type="SUPFAM" id="SSF52540">
    <property type="entry name" value="P-loop containing nucleoside triphosphate hydrolases"/>
    <property type="match status" value="1"/>
</dbReference>
<dbReference type="PROSITE" id="PS00486">
    <property type="entry name" value="DNA_MISMATCH_REPAIR_2"/>
    <property type="match status" value="1"/>
</dbReference>
<protein>
    <recommendedName>
        <fullName evidence="1">DNA mismatch repair protein MutS</fullName>
    </recommendedName>
</protein>
<proteinExistence type="inferred from homology"/>